<dbReference type="EMBL" id="AP009324">
    <property type="protein sequence ID" value="BAF79109.1"/>
    <property type="molecule type" value="Genomic_DNA"/>
</dbReference>
<dbReference type="RefSeq" id="WP_000644737.1">
    <property type="nucleotide sequence ID" value="NZ_CTYB01000025.1"/>
</dbReference>
<dbReference type="SMR" id="A7X5F2"/>
<dbReference type="GeneID" id="98346554"/>
<dbReference type="KEGG" id="saw:SAHV_2226"/>
<dbReference type="HOGENOM" id="CLU_158491_5_2_9"/>
<dbReference type="GO" id="GO:0022625">
    <property type="term" value="C:cytosolic large ribosomal subunit"/>
    <property type="evidence" value="ECO:0007669"/>
    <property type="project" value="TreeGrafter"/>
</dbReference>
<dbReference type="GO" id="GO:0003735">
    <property type="term" value="F:structural constituent of ribosome"/>
    <property type="evidence" value="ECO:0007669"/>
    <property type="project" value="InterPro"/>
</dbReference>
<dbReference type="GO" id="GO:0006412">
    <property type="term" value="P:translation"/>
    <property type="evidence" value="ECO:0007669"/>
    <property type="project" value="UniProtKB-UniRule"/>
</dbReference>
<dbReference type="CDD" id="cd00427">
    <property type="entry name" value="Ribosomal_L29_HIP"/>
    <property type="match status" value="1"/>
</dbReference>
<dbReference type="FunFam" id="1.10.287.310:FF:000001">
    <property type="entry name" value="50S ribosomal protein L29"/>
    <property type="match status" value="1"/>
</dbReference>
<dbReference type="Gene3D" id="1.10.287.310">
    <property type="match status" value="1"/>
</dbReference>
<dbReference type="HAMAP" id="MF_00374">
    <property type="entry name" value="Ribosomal_uL29"/>
    <property type="match status" value="1"/>
</dbReference>
<dbReference type="InterPro" id="IPR050063">
    <property type="entry name" value="Ribosomal_protein_uL29"/>
</dbReference>
<dbReference type="InterPro" id="IPR001854">
    <property type="entry name" value="Ribosomal_uL29"/>
</dbReference>
<dbReference type="InterPro" id="IPR036049">
    <property type="entry name" value="Ribosomal_uL29_sf"/>
</dbReference>
<dbReference type="NCBIfam" id="TIGR00012">
    <property type="entry name" value="L29"/>
    <property type="match status" value="1"/>
</dbReference>
<dbReference type="PANTHER" id="PTHR10916">
    <property type="entry name" value="60S RIBOSOMAL PROTEIN L35/50S RIBOSOMAL PROTEIN L29"/>
    <property type="match status" value="1"/>
</dbReference>
<dbReference type="PANTHER" id="PTHR10916:SF0">
    <property type="entry name" value="LARGE RIBOSOMAL SUBUNIT PROTEIN UL29C"/>
    <property type="match status" value="1"/>
</dbReference>
<dbReference type="Pfam" id="PF00831">
    <property type="entry name" value="Ribosomal_L29"/>
    <property type="match status" value="1"/>
</dbReference>
<dbReference type="SUPFAM" id="SSF46561">
    <property type="entry name" value="Ribosomal protein L29 (L29p)"/>
    <property type="match status" value="1"/>
</dbReference>
<feature type="chain" id="PRO_1000007616" description="Large ribosomal subunit protein uL29">
    <location>
        <begin position="1"/>
        <end position="69"/>
    </location>
</feature>
<protein>
    <recommendedName>
        <fullName evidence="1">Large ribosomal subunit protein uL29</fullName>
    </recommendedName>
    <alternativeName>
        <fullName evidence="2">50S ribosomal protein L29</fullName>
    </alternativeName>
</protein>
<sequence length="69" mass="8090">MKAKEIRDLTTSEIEEQIKSSKEELFNLRFQLATGQLEETARIRTVRKTIARLKTVAREREIEQSKANQ</sequence>
<gene>
    <name evidence="1" type="primary">rpmC</name>
    <name type="ordered locus">SAHV_2226</name>
</gene>
<proteinExistence type="inferred from homology"/>
<name>RL29_STAA1</name>
<comment type="similarity">
    <text evidence="1">Belongs to the universal ribosomal protein uL29 family.</text>
</comment>
<reference key="1">
    <citation type="journal article" date="2008" name="Antimicrob. Agents Chemother.">
        <title>Mutated response regulator graR is responsible for phenotypic conversion of Staphylococcus aureus from heterogeneous vancomycin-intermediate resistance to vancomycin-intermediate resistance.</title>
        <authorList>
            <person name="Neoh H.-M."/>
            <person name="Cui L."/>
            <person name="Yuzawa H."/>
            <person name="Takeuchi F."/>
            <person name="Matsuo M."/>
            <person name="Hiramatsu K."/>
        </authorList>
    </citation>
    <scope>NUCLEOTIDE SEQUENCE [LARGE SCALE GENOMIC DNA]</scope>
    <source>
        <strain>Mu3 / ATCC 700698</strain>
    </source>
</reference>
<evidence type="ECO:0000255" key="1">
    <source>
        <dbReference type="HAMAP-Rule" id="MF_00374"/>
    </source>
</evidence>
<evidence type="ECO:0000305" key="2"/>
<keyword id="KW-0687">Ribonucleoprotein</keyword>
<keyword id="KW-0689">Ribosomal protein</keyword>
<organism>
    <name type="scientific">Staphylococcus aureus (strain Mu3 / ATCC 700698)</name>
    <dbReference type="NCBI Taxonomy" id="418127"/>
    <lineage>
        <taxon>Bacteria</taxon>
        <taxon>Bacillati</taxon>
        <taxon>Bacillota</taxon>
        <taxon>Bacilli</taxon>
        <taxon>Bacillales</taxon>
        <taxon>Staphylococcaceae</taxon>
        <taxon>Staphylococcus</taxon>
    </lineage>
</organism>
<accession>A7X5F2</accession>